<sequence>MSGEWQPRTLLGRLVVEGKIKSIDEVFARNMPIREVEIIDTLLPGLKSEVLSVGFVQRQTDSGEVSQYQVTVAVGNEDGYVGVGMGKSRQIGIAIEKATRRAKLNIVPVRRGCGSWECLCGEPHSIPFKVEGKAGSVKIELIPAPKGVGLVASDVAKTVLRLAGIKDVWSRSYGETRTTHNMAKAVYEALKKTYQFYSPDQW</sequence>
<accession>A1RWR6</accession>
<dbReference type="EMBL" id="CP000505">
    <property type="protein sequence ID" value="ABL77646.1"/>
    <property type="molecule type" value="Genomic_DNA"/>
</dbReference>
<dbReference type="SMR" id="A1RWR6"/>
<dbReference type="STRING" id="368408.Tpen_0236"/>
<dbReference type="EnsemblBacteria" id="ABL77646">
    <property type="protein sequence ID" value="ABL77646"/>
    <property type="gene ID" value="Tpen_0236"/>
</dbReference>
<dbReference type="KEGG" id="tpe:Tpen_0236"/>
<dbReference type="eggNOG" id="arCOG04087">
    <property type="taxonomic scope" value="Archaea"/>
</dbReference>
<dbReference type="HOGENOM" id="CLU_065898_0_1_2"/>
<dbReference type="OrthoDB" id="38155at2157"/>
<dbReference type="Proteomes" id="UP000000641">
    <property type="component" value="Chromosome"/>
</dbReference>
<dbReference type="GO" id="GO:0022627">
    <property type="term" value="C:cytosolic small ribosomal subunit"/>
    <property type="evidence" value="ECO:0007669"/>
    <property type="project" value="TreeGrafter"/>
</dbReference>
<dbReference type="GO" id="GO:0019843">
    <property type="term" value="F:rRNA binding"/>
    <property type="evidence" value="ECO:0007669"/>
    <property type="project" value="UniProtKB-UniRule"/>
</dbReference>
<dbReference type="GO" id="GO:0003735">
    <property type="term" value="F:structural constituent of ribosome"/>
    <property type="evidence" value="ECO:0007669"/>
    <property type="project" value="InterPro"/>
</dbReference>
<dbReference type="GO" id="GO:0006412">
    <property type="term" value="P:translation"/>
    <property type="evidence" value="ECO:0007669"/>
    <property type="project" value="UniProtKB-UniRule"/>
</dbReference>
<dbReference type="FunFam" id="3.30.160.20:FF:000002">
    <property type="entry name" value="40S ribosomal protein S2"/>
    <property type="match status" value="1"/>
</dbReference>
<dbReference type="FunFam" id="3.30.230.10:FF:000004">
    <property type="entry name" value="40S ribosomal protein S2"/>
    <property type="match status" value="1"/>
</dbReference>
<dbReference type="Gene3D" id="3.30.160.20">
    <property type="match status" value="1"/>
</dbReference>
<dbReference type="Gene3D" id="3.30.230.10">
    <property type="match status" value="1"/>
</dbReference>
<dbReference type="HAMAP" id="MF_01307_A">
    <property type="entry name" value="Ribosomal_uS5_A"/>
    <property type="match status" value="1"/>
</dbReference>
<dbReference type="InterPro" id="IPR020568">
    <property type="entry name" value="Ribosomal_Su5_D2-typ_SF"/>
</dbReference>
<dbReference type="InterPro" id="IPR000851">
    <property type="entry name" value="Ribosomal_uS5"/>
</dbReference>
<dbReference type="InterPro" id="IPR047866">
    <property type="entry name" value="Ribosomal_uS5_arc"/>
</dbReference>
<dbReference type="InterPro" id="IPR005324">
    <property type="entry name" value="Ribosomal_uS5_C"/>
</dbReference>
<dbReference type="InterPro" id="IPR005711">
    <property type="entry name" value="Ribosomal_uS5_euk/arc"/>
</dbReference>
<dbReference type="InterPro" id="IPR013810">
    <property type="entry name" value="Ribosomal_uS5_N"/>
</dbReference>
<dbReference type="InterPro" id="IPR018192">
    <property type="entry name" value="Ribosomal_uS5_N_CS"/>
</dbReference>
<dbReference type="InterPro" id="IPR014721">
    <property type="entry name" value="Ribsml_uS5_D2-typ_fold_subgr"/>
</dbReference>
<dbReference type="NCBIfam" id="NF003125">
    <property type="entry name" value="PRK04044.1"/>
    <property type="match status" value="1"/>
</dbReference>
<dbReference type="NCBIfam" id="TIGR01020">
    <property type="entry name" value="uS5_euk_arch"/>
    <property type="match status" value="1"/>
</dbReference>
<dbReference type="PANTHER" id="PTHR13718:SF4">
    <property type="entry name" value="40S RIBOSOMAL PROTEIN S2"/>
    <property type="match status" value="1"/>
</dbReference>
<dbReference type="PANTHER" id="PTHR13718">
    <property type="entry name" value="RIBOSOMAL S SUBUNIT"/>
    <property type="match status" value="1"/>
</dbReference>
<dbReference type="Pfam" id="PF00333">
    <property type="entry name" value="Ribosomal_S5"/>
    <property type="match status" value="1"/>
</dbReference>
<dbReference type="Pfam" id="PF03719">
    <property type="entry name" value="Ribosomal_S5_C"/>
    <property type="match status" value="1"/>
</dbReference>
<dbReference type="SUPFAM" id="SSF54768">
    <property type="entry name" value="dsRNA-binding domain-like"/>
    <property type="match status" value="1"/>
</dbReference>
<dbReference type="SUPFAM" id="SSF54211">
    <property type="entry name" value="Ribosomal protein S5 domain 2-like"/>
    <property type="match status" value="1"/>
</dbReference>
<dbReference type="PROSITE" id="PS00585">
    <property type="entry name" value="RIBOSOMAL_S5"/>
    <property type="match status" value="1"/>
</dbReference>
<dbReference type="PROSITE" id="PS50881">
    <property type="entry name" value="S5_DSRBD"/>
    <property type="match status" value="1"/>
</dbReference>
<comment type="function">
    <text evidence="1">With S4 and S12 plays an important role in translational accuracy.</text>
</comment>
<comment type="subunit">
    <text evidence="1">Part of the 30S ribosomal subunit. Contacts protein S4.</text>
</comment>
<comment type="domain">
    <text>The N-terminal domain interacts with the head of the 30S subunit; the C-terminal domain interacts with the body and contacts protein S4. The interaction surface between S4 and S5 is involved in control of translational fidelity.</text>
</comment>
<comment type="similarity">
    <text evidence="1">Belongs to the universal ribosomal protein uS5 family.</text>
</comment>
<keyword id="KW-1185">Reference proteome</keyword>
<keyword id="KW-0687">Ribonucleoprotein</keyword>
<keyword id="KW-0689">Ribosomal protein</keyword>
<keyword id="KW-0694">RNA-binding</keyword>
<keyword id="KW-0699">rRNA-binding</keyword>
<proteinExistence type="inferred from homology"/>
<organism>
    <name type="scientific">Thermofilum pendens (strain DSM 2475 / Hrk 5)</name>
    <dbReference type="NCBI Taxonomy" id="368408"/>
    <lineage>
        <taxon>Archaea</taxon>
        <taxon>Thermoproteota</taxon>
        <taxon>Thermoprotei</taxon>
        <taxon>Thermofilales</taxon>
        <taxon>Thermofilaceae</taxon>
        <taxon>Thermofilum</taxon>
    </lineage>
</organism>
<reference key="1">
    <citation type="journal article" date="2008" name="J. Bacteriol.">
        <title>Genome sequence of Thermofilum pendens reveals an exceptional loss of biosynthetic pathways without genome reduction.</title>
        <authorList>
            <person name="Anderson I."/>
            <person name="Rodriguez J."/>
            <person name="Susanti D."/>
            <person name="Porat I."/>
            <person name="Reich C."/>
            <person name="Ulrich L.E."/>
            <person name="Elkins J.G."/>
            <person name="Mavromatis K."/>
            <person name="Lykidis A."/>
            <person name="Kim E."/>
            <person name="Thompson L.S."/>
            <person name="Nolan M."/>
            <person name="Land M."/>
            <person name="Copeland A."/>
            <person name="Lapidus A."/>
            <person name="Lucas S."/>
            <person name="Detter C."/>
            <person name="Zhulin I.B."/>
            <person name="Olsen G.J."/>
            <person name="Whitman W."/>
            <person name="Mukhopadhyay B."/>
            <person name="Bristow J."/>
            <person name="Kyrpides N."/>
        </authorList>
    </citation>
    <scope>NUCLEOTIDE SEQUENCE [LARGE SCALE GENOMIC DNA]</scope>
    <source>
        <strain>DSM 2475 / Hrk 5</strain>
    </source>
</reference>
<protein>
    <recommendedName>
        <fullName evidence="1">Small ribosomal subunit protein uS5</fullName>
    </recommendedName>
    <alternativeName>
        <fullName evidence="2">30S ribosomal protein S5</fullName>
    </alternativeName>
</protein>
<gene>
    <name evidence="1" type="primary">rps5</name>
    <name type="ordered locus">Tpen_0236</name>
</gene>
<name>RS5_THEPD</name>
<feature type="chain" id="PRO_0000293220" description="Small ribosomal subunit protein uS5">
    <location>
        <begin position="1"/>
        <end position="202"/>
    </location>
</feature>
<feature type="domain" description="S5 DRBM" evidence="1">
    <location>
        <begin position="46"/>
        <end position="109"/>
    </location>
</feature>
<evidence type="ECO:0000255" key="1">
    <source>
        <dbReference type="HAMAP-Rule" id="MF_01307"/>
    </source>
</evidence>
<evidence type="ECO:0000305" key="2"/>